<sequence>MIFFSILITIFAYFLGSISSAILICKILRFPDPRNFGSKNPGATNILRIAGLKIAISVILFDILKGAIPMWLGYHLKISPIFLGATAVFSCLGHMYPIFFKFYGGKGVATAFGVLTTIDLHLSIVMISSWTLTVLSFGYSSLGAIVTAFIIPCYAWHFQSQYLLPTIIISSLVVIKHAANIKRLWHHKENRIWRK</sequence>
<feature type="chain" id="PRO_0000188332" description="Glycerol-3-phosphate acyltransferase">
    <location>
        <begin position="1"/>
        <end position="195"/>
    </location>
</feature>
<feature type="transmembrane region" description="Helical" evidence="1">
    <location>
        <begin position="2"/>
        <end position="22"/>
    </location>
</feature>
<feature type="transmembrane region" description="Helical" evidence="1">
    <location>
        <begin position="54"/>
        <end position="74"/>
    </location>
</feature>
<feature type="transmembrane region" description="Helical" evidence="1">
    <location>
        <begin position="80"/>
        <end position="100"/>
    </location>
</feature>
<feature type="transmembrane region" description="Helical" evidence="1">
    <location>
        <begin position="107"/>
        <end position="127"/>
    </location>
</feature>
<feature type="transmembrane region" description="Helical" evidence="1">
    <location>
        <begin position="132"/>
        <end position="152"/>
    </location>
</feature>
<feature type="transmembrane region" description="Helical" evidence="1">
    <location>
        <begin position="155"/>
        <end position="175"/>
    </location>
</feature>
<reference key="1">
    <citation type="journal article" date="2005" name="Genome Res.">
        <title>Genome sequence of Blochmannia pennsylvanicus indicates parallel evolutionary trends among bacterial mutualists of insects.</title>
        <authorList>
            <person name="Degnan P.H."/>
            <person name="Lazarus A.B."/>
            <person name="Wernegreen J.J."/>
        </authorList>
    </citation>
    <scope>NUCLEOTIDE SEQUENCE [LARGE SCALE GENOMIC DNA]</scope>
    <source>
        <strain>BPEN</strain>
    </source>
</reference>
<gene>
    <name evidence="1" type="primary">plsY</name>
    <name type="ordered locus">BPEN_061</name>
</gene>
<name>PLSY_BLOPB</name>
<accession>Q493X7</accession>
<protein>
    <recommendedName>
        <fullName evidence="1">Glycerol-3-phosphate acyltransferase</fullName>
    </recommendedName>
    <alternativeName>
        <fullName evidence="1">Acyl-PO4 G3P acyltransferase</fullName>
    </alternativeName>
    <alternativeName>
        <fullName evidence="1">Acyl-phosphate--glycerol-3-phosphate acyltransferase</fullName>
    </alternativeName>
    <alternativeName>
        <fullName evidence="1">G3P acyltransferase</fullName>
        <shortName evidence="1">GPAT</shortName>
        <ecNumber evidence="1">2.3.1.275</ecNumber>
    </alternativeName>
    <alternativeName>
        <fullName evidence="1">Lysophosphatidic acid synthase</fullName>
        <shortName evidence="1">LPA synthase</shortName>
    </alternativeName>
</protein>
<organism>
    <name type="scientific">Blochmanniella pennsylvanica (strain BPEN)</name>
    <dbReference type="NCBI Taxonomy" id="291272"/>
    <lineage>
        <taxon>Bacteria</taxon>
        <taxon>Pseudomonadati</taxon>
        <taxon>Pseudomonadota</taxon>
        <taxon>Gammaproteobacteria</taxon>
        <taxon>Enterobacterales</taxon>
        <taxon>Enterobacteriaceae</taxon>
        <taxon>ant endosymbionts</taxon>
        <taxon>Candidatus Blochmanniella</taxon>
    </lineage>
</organism>
<dbReference type="EC" id="2.3.1.275" evidence="1"/>
<dbReference type="EMBL" id="CP000016">
    <property type="protein sequence ID" value="AAZ40707.1"/>
    <property type="molecule type" value="Genomic_DNA"/>
</dbReference>
<dbReference type="RefSeq" id="WP_011282613.1">
    <property type="nucleotide sequence ID" value="NC_007292.1"/>
</dbReference>
<dbReference type="SMR" id="Q493X7"/>
<dbReference type="STRING" id="291272.BPEN_061"/>
<dbReference type="KEGG" id="bpn:BPEN_061"/>
<dbReference type="eggNOG" id="COG0344">
    <property type="taxonomic scope" value="Bacteria"/>
</dbReference>
<dbReference type="HOGENOM" id="CLU_081254_0_2_6"/>
<dbReference type="OrthoDB" id="9777124at2"/>
<dbReference type="UniPathway" id="UPA00085"/>
<dbReference type="Proteomes" id="UP000007794">
    <property type="component" value="Chromosome"/>
</dbReference>
<dbReference type="GO" id="GO:0005886">
    <property type="term" value="C:plasma membrane"/>
    <property type="evidence" value="ECO:0007669"/>
    <property type="project" value="UniProtKB-SubCell"/>
</dbReference>
<dbReference type="GO" id="GO:0043772">
    <property type="term" value="F:acyl-phosphate glycerol-3-phosphate acyltransferase activity"/>
    <property type="evidence" value="ECO:0007669"/>
    <property type="project" value="UniProtKB-UniRule"/>
</dbReference>
<dbReference type="GO" id="GO:0008654">
    <property type="term" value="P:phospholipid biosynthetic process"/>
    <property type="evidence" value="ECO:0007669"/>
    <property type="project" value="UniProtKB-UniRule"/>
</dbReference>
<dbReference type="HAMAP" id="MF_01043">
    <property type="entry name" value="PlsY"/>
    <property type="match status" value="1"/>
</dbReference>
<dbReference type="InterPro" id="IPR003811">
    <property type="entry name" value="G3P_acylTferase_PlsY"/>
</dbReference>
<dbReference type="NCBIfam" id="TIGR00023">
    <property type="entry name" value="glycerol-3-phosphate 1-O-acyltransferase PlsY"/>
    <property type="match status" value="1"/>
</dbReference>
<dbReference type="PANTHER" id="PTHR30309:SF0">
    <property type="entry name" value="GLYCEROL-3-PHOSPHATE ACYLTRANSFERASE-RELATED"/>
    <property type="match status" value="1"/>
</dbReference>
<dbReference type="PANTHER" id="PTHR30309">
    <property type="entry name" value="INNER MEMBRANE PROTEIN YGIH"/>
    <property type="match status" value="1"/>
</dbReference>
<dbReference type="Pfam" id="PF02660">
    <property type="entry name" value="G3P_acyltransf"/>
    <property type="match status" value="1"/>
</dbReference>
<dbReference type="SMART" id="SM01207">
    <property type="entry name" value="G3P_acyltransf"/>
    <property type="match status" value="1"/>
</dbReference>
<comment type="function">
    <text evidence="1">Catalyzes the transfer of an acyl group from acyl-phosphate (acyl-PO(4)) to glycerol-3-phosphate (G3P) to form lysophosphatidic acid (LPA). This enzyme utilizes acyl-phosphate as fatty acyl donor, but not acyl-CoA or acyl-ACP.</text>
</comment>
<comment type="catalytic activity">
    <reaction evidence="1">
        <text>an acyl phosphate + sn-glycerol 3-phosphate = a 1-acyl-sn-glycero-3-phosphate + phosphate</text>
        <dbReference type="Rhea" id="RHEA:34075"/>
        <dbReference type="ChEBI" id="CHEBI:43474"/>
        <dbReference type="ChEBI" id="CHEBI:57597"/>
        <dbReference type="ChEBI" id="CHEBI:57970"/>
        <dbReference type="ChEBI" id="CHEBI:59918"/>
        <dbReference type="EC" id="2.3.1.275"/>
    </reaction>
</comment>
<comment type="pathway">
    <text evidence="1">Lipid metabolism; phospholipid metabolism.</text>
</comment>
<comment type="subunit">
    <text evidence="1">Probably interacts with PlsX.</text>
</comment>
<comment type="subcellular location">
    <subcellularLocation>
        <location evidence="1">Cell inner membrane</location>
        <topology evidence="1">Multi-pass membrane protein</topology>
    </subcellularLocation>
</comment>
<comment type="similarity">
    <text evidence="1">Belongs to the PlsY family.</text>
</comment>
<proteinExistence type="inferred from homology"/>
<evidence type="ECO:0000255" key="1">
    <source>
        <dbReference type="HAMAP-Rule" id="MF_01043"/>
    </source>
</evidence>
<keyword id="KW-0997">Cell inner membrane</keyword>
<keyword id="KW-1003">Cell membrane</keyword>
<keyword id="KW-0444">Lipid biosynthesis</keyword>
<keyword id="KW-0443">Lipid metabolism</keyword>
<keyword id="KW-0472">Membrane</keyword>
<keyword id="KW-0594">Phospholipid biosynthesis</keyword>
<keyword id="KW-1208">Phospholipid metabolism</keyword>
<keyword id="KW-1185">Reference proteome</keyword>
<keyword id="KW-0808">Transferase</keyword>
<keyword id="KW-0812">Transmembrane</keyword>
<keyword id="KW-1133">Transmembrane helix</keyword>